<sequence>MAFLKKSLFLVLFLGLVSLSICEKEKKEQEDEDENEEEKESEEGSEEKRGLLDTLGGILGLGR</sequence>
<feature type="signal peptide" evidence="2">
    <location>
        <begin position="1"/>
        <end position="22"/>
    </location>
</feature>
<feature type="propeptide" id="PRO_0000450238" evidence="7">
    <location>
        <begin position="23"/>
        <end position="49"/>
    </location>
</feature>
<feature type="peptide" id="PRO_5004251426" description="Frenatin 1.1" evidence="4">
    <location>
        <begin position="50"/>
        <end position="61"/>
    </location>
</feature>
<feature type="region of interest" description="Disordered" evidence="3">
    <location>
        <begin position="25"/>
        <end position="63"/>
    </location>
</feature>
<feature type="compositionally biased region" description="Acidic residues" evidence="3">
    <location>
        <begin position="30"/>
        <end position="45"/>
    </location>
</feature>
<feature type="modified residue" description="Leucine amide" evidence="4">
    <location>
        <position position="61"/>
    </location>
</feature>
<accession>Q571V6</accession>
<keyword id="KW-0027">Amidation</keyword>
<keyword id="KW-0878">Amphibian defense peptide</keyword>
<keyword id="KW-0044">Antibiotic</keyword>
<keyword id="KW-0929">Antimicrobial</keyword>
<keyword id="KW-0903">Direct protein sequencing</keyword>
<keyword id="KW-0391">Immunity</keyword>
<keyword id="KW-0399">Innate immunity</keyword>
<keyword id="KW-0964">Secreted</keyword>
<keyword id="KW-0732">Signal</keyword>
<name>FRE11_NYCIN</name>
<organism>
    <name type="scientific">Nyctimystes infrafrenatus</name>
    <name type="common">White-lipped tree frog</name>
    <name type="synonym">Litoria infrafrenata</name>
    <dbReference type="NCBI Taxonomy" id="61195"/>
    <lineage>
        <taxon>Eukaryota</taxon>
        <taxon>Metazoa</taxon>
        <taxon>Chordata</taxon>
        <taxon>Craniata</taxon>
        <taxon>Vertebrata</taxon>
        <taxon>Euteleostomi</taxon>
        <taxon>Amphibia</taxon>
        <taxon>Batrachia</taxon>
        <taxon>Anura</taxon>
        <taxon>Neobatrachia</taxon>
        <taxon>Hyloidea</taxon>
        <taxon>Hylidae</taxon>
        <taxon>Pelodryadinae</taxon>
        <taxon>Nyctimystes</taxon>
    </lineage>
</organism>
<protein>
    <recommendedName>
        <fullName evidence="5">Frenatin 1.1</fullName>
    </recommendedName>
</protein>
<reference key="1">
    <citation type="journal article" date="2005" name="Peptides">
        <title>Novel frenatins from the skin of the Australasian giant white-lipped tree frog, Litoria infrafrenata: cloning of precursor cDNAs and identification in defensive skin secretion.</title>
        <authorList>
            <person name="Zhou M."/>
            <person name="Chen T."/>
            <person name="Walker B."/>
            <person name="Shaw C."/>
        </authorList>
    </citation>
    <scope>NUCLEOTIDE SEQUENCE [MRNA]</scope>
    <scope>PROTEIN SEQUENCE OF 50-61</scope>
    <scope>MASS SPECTROMETRY</scope>
    <scope>SUBCELLULAR LOCATION</scope>
    <scope>AMIDATION AT LEU-61</scope>
    <source>
        <tissue>Skin</tissue>
    </source>
</reference>
<dbReference type="EMBL" id="AJ937523">
    <property type="protein sequence ID" value="CAI77672.1"/>
    <property type="molecule type" value="mRNA"/>
</dbReference>
<dbReference type="GO" id="GO:0005576">
    <property type="term" value="C:extracellular region"/>
    <property type="evidence" value="ECO:0007669"/>
    <property type="project" value="UniProtKB-SubCell"/>
</dbReference>
<dbReference type="GO" id="GO:0042742">
    <property type="term" value="P:defense response to bacterium"/>
    <property type="evidence" value="ECO:0007669"/>
    <property type="project" value="UniProtKB-KW"/>
</dbReference>
<dbReference type="GO" id="GO:0045087">
    <property type="term" value="P:innate immune response"/>
    <property type="evidence" value="ECO:0007669"/>
    <property type="project" value="UniProtKB-KW"/>
</dbReference>
<dbReference type="InterPro" id="IPR004275">
    <property type="entry name" value="Frog_antimicrobial_propeptide"/>
</dbReference>
<dbReference type="InterPro" id="IPR016322">
    <property type="entry name" value="FSAP"/>
</dbReference>
<dbReference type="Pfam" id="PF03032">
    <property type="entry name" value="FSAP_sig_propep"/>
    <property type="match status" value="1"/>
</dbReference>
<dbReference type="PIRSF" id="PIRSF001822">
    <property type="entry name" value="Dermaseptin_precursor"/>
    <property type="match status" value="1"/>
</dbReference>
<proteinExistence type="evidence at protein level"/>
<comment type="function">
    <text evidence="1">Antimicrobial peptide with selective activity. Is only active against Micrococcus luteus (MIC=25 ug/ml) and not against Bacillus cereus, Escherichia coli, Leuconostoc mesenteroides, Micrococcus luteus, Pastewella haemolytica, Staphylococcus aureus, Streptococcus faecalis and Streptococcus uberis.</text>
</comment>
<comment type="subcellular location">
    <subcellularLocation>
        <location evidence="4">Secreted</location>
    </subcellularLocation>
</comment>
<comment type="tissue specificity">
    <text evidence="7">Expressed by the skin glands.</text>
</comment>
<comment type="mass spectrometry"/>
<comment type="similarity">
    <text evidence="6">Belongs to the frog skin active peptide (FSAP) family. Frenatin subfamily.</text>
</comment>
<evidence type="ECO:0000250" key="1">
    <source>
        <dbReference type="UniProtKB" id="P82021"/>
    </source>
</evidence>
<evidence type="ECO:0000255" key="2"/>
<evidence type="ECO:0000256" key="3">
    <source>
        <dbReference type="SAM" id="MobiDB-lite"/>
    </source>
</evidence>
<evidence type="ECO:0000269" key="4">
    <source>
    </source>
</evidence>
<evidence type="ECO:0000303" key="5">
    <source>
    </source>
</evidence>
<evidence type="ECO:0000305" key="6"/>
<evidence type="ECO:0000305" key="7">
    <source>
    </source>
</evidence>